<gene>
    <name type="primary">env</name>
</gene>
<proteinExistence type="inferred from homology"/>
<comment type="function">
    <text evidence="1">The surface protein (SU) attaches the virus to the host cell by binding to its receptor. This interaction activates a thiol in a CXXC motif of the C-terminal domain, where the other Cys residue participates in the formation of the intersubunit disulfide. The activated thiol will attack the disulfide and cause its isomerization into a disulfide isomer within the motif. This leads to SU displacement and TM refolding, and is thought to activate its fusogenic potential by unmasking its fusion peptide. Fusion occurs at the host cell plasma membrane (By similarity).</text>
</comment>
<comment type="function">
    <text evidence="1">The transmembrane protein (TM) acts as a class I viral fusion protein. Under the current model, the protein has at least 3 conformational states: pre-fusion native state, pre-hairpin intermediate state, and post-fusion hairpin state. During viral and target cell membrane fusion, the coiled coil regions (heptad repeats) assume a trimer-of-hairpins structure, positioning the fusion peptide in close proximity to the C-terminal region of the ectodomain. The formation of this structure appears to drive apposition and subsequent fusion of viral and target cell membranes. Membranes fusion leads to delivery of the nucleocapsid into the cytoplasm (By similarity).</text>
</comment>
<comment type="subunit">
    <text evidence="1">The mature envelope protein (Env) consists of a trimer of SU-TM heterodimers attached by a labile interchain disulfide bond. The activated Env consists of SU monomers and TM trimers (By similarity).</text>
</comment>
<comment type="subcellular location">
    <molecule>Transmembrane protein</molecule>
    <subcellularLocation>
        <location evidence="1">Virion membrane</location>
        <topology evidence="1">Single-pass type I membrane protein</topology>
    </subcellularLocation>
    <subcellularLocation>
        <location evidence="1">Host cell membrane</location>
        <topology evidence="1">Single-pass type I membrane protein</topology>
    </subcellularLocation>
</comment>
<comment type="subcellular location">
    <molecule>Surface protein</molecule>
    <subcellularLocation>
        <location>Virion membrane</location>
        <topology>Peripheral membrane protein</topology>
    </subcellularLocation>
    <subcellularLocation>
        <location evidence="1">Host cell membrane</location>
        <topology evidence="1">Peripheral membrane protein</topology>
    </subcellularLocation>
    <text evidence="1">The surface protein is not anchored to the viral envelope, but associates with the virion surface through its binding to TM. Both proteins are thought to be concentrated at the site of budding and incorporated into the virions possibly by contacts between the cytoplasmic tail of Env and the N-terminus of Gag (By similarity).</text>
</comment>
<comment type="subcellular location">
    <molecule>R-peptide</molecule>
    <subcellularLocation>
        <location>Host cell membrane</location>
        <topology>Peripheral membrane protein</topology>
    </subcellularLocation>
    <text evidence="1">The R-peptide is membrane-associated through its palmitate.</text>
</comment>
<comment type="domain">
    <text evidence="1">The 17 amino acids long immunosuppressive region is present in many retroviral envelope proteins. Synthetic peptides derived from this relatively conserved sequence inhibit immune function in vitro and in vivo (By similarity).</text>
</comment>
<comment type="domain">
    <text evidence="1">The YXXL motif is involved in determining the exact site of viral release at the surface of infected mononuclear cells and promotes endocytosis.</text>
</comment>
<comment type="PTM">
    <text evidence="1">Specific enzymatic cleavages in vivo yield mature proteins. Envelope glycoproteins are synthesized as an inactive precursor that is N-glycosylated and processed likely by host cell furin or by a furin-like protease in the Golgi to yield the mature SU and TM proteins. The cleavage site between SU and TM requires the minimal sequence [KR]-X-[KR]-R. The R-peptide is released from the C-terminus of the cytoplasmic tail of the TM protein upon particle formation as a result of proteolytic cleavage by the viral protease. Cleavage of this peptide is required for TM to become fusogenic (By similarity).</text>
</comment>
<comment type="PTM">
    <text evidence="1">The CXXC motif is highly conserved across a broad range of retroviral envelope proteins. It is thought to participate in the formation of a labile disulfide bond possibly with the CX6CC motif present in the transmembrane protein. Isomerization of the intersubunit disulfide bond to an SU intrachain disulfide bond is thought to occur upon receptor recognition in order to allow membrane fusion (By similarity).</text>
</comment>
<comment type="PTM">
    <text evidence="1">The transmembrane protein is palmitoylated.</text>
</comment>
<comment type="PTM">
    <text>The R-peptide is palmitoylated.</text>
</comment>
<comment type="caution">
    <text evidence="5 6">Originally thought to be characterized from prostate tumors, the described gammaretrovirus XMRV is in fact laboratory-derived and there is no association of XMRV with prostate cancer.</text>
</comment>
<organismHost>
    <name type="scientific">Homo sapiens</name>
    <name type="common">Human</name>
    <dbReference type="NCBI Taxonomy" id="9606"/>
</organismHost>
<feature type="signal peptide" evidence="2">
    <location>
        <begin position="1"/>
        <end position="33"/>
    </location>
</feature>
<feature type="chain" id="PRO_0000390831" description="Envelope glycoprotein" evidence="1">
    <location>
        <begin position="34"/>
        <end position="645"/>
    </location>
</feature>
<feature type="chain" id="PRO_0000390832" description="Surface protein" evidence="1">
    <location>
        <begin position="34"/>
        <end position="444"/>
    </location>
</feature>
<feature type="chain" id="PRO_0000390833" description="Transmembrane protein" evidence="1">
    <location>
        <begin position="445"/>
        <end position="645"/>
    </location>
</feature>
<feature type="peptide" id="PRO_0000390834" description="R-peptide" evidence="1">
    <location>
        <begin position="625"/>
        <end position="645"/>
    </location>
</feature>
<feature type="topological domain" description="Extracellular" evidence="2">
    <location>
        <begin position="34"/>
        <end position="585"/>
    </location>
</feature>
<feature type="transmembrane region" description="Helical" evidence="2">
    <location>
        <begin position="586"/>
        <end position="606"/>
    </location>
</feature>
<feature type="topological domain" description="Cytoplasmic" evidence="2">
    <location>
        <begin position="607"/>
        <end position="640"/>
    </location>
</feature>
<feature type="region of interest" description="Receptor-binding domain (RBD)" evidence="2">
    <location>
        <begin position="32"/>
        <end position="237"/>
    </location>
</feature>
<feature type="region of interest" description="Disordered" evidence="3">
    <location>
        <begin position="260"/>
        <end position="285"/>
    </location>
</feature>
<feature type="region of interest" description="Fusion peptide" evidence="1">
    <location>
        <begin position="447"/>
        <end position="467"/>
    </location>
</feature>
<feature type="region of interest" description="Immunosuppression" evidence="1">
    <location>
        <begin position="513"/>
        <end position="529"/>
    </location>
</feature>
<feature type="coiled-coil region" evidence="2">
    <location>
        <begin position="490"/>
        <end position="510"/>
    </location>
</feature>
<feature type="short sequence motif" description="CXXC" evidence="1">
    <location>
        <begin position="311"/>
        <end position="314"/>
    </location>
</feature>
<feature type="short sequence motif" description="CX6CC" evidence="1">
    <location>
        <begin position="530"/>
        <end position="538"/>
    </location>
</feature>
<feature type="short sequence motif" description="YXXL motif; contains endocytosis signal" evidence="1">
    <location>
        <begin position="630"/>
        <end position="633"/>
    </location>
</feature>
<feature type="site" description="Cleavage; by host" evidence="1">
    <location>
        <begin position="444"/>
        <end position="445"/>
    </location>
</feature>
<feature type="site" description="Cleavage; by viral protease p14" evidence="1">
    <location>
        <begin position="624"/>
        <end position="625"/>
    </location>
</feature>
<feature type="lipid moiety-binding region" description="S-palmitoyl cysteine; by host" evidence="1">
    <location>
        <position position="605"/>
    </location>
</feature>
<feature type="glycosylation site" description="N-linked (GlcNAc...) asparagine; by host" evidence="2">
    <location>
        <position position="43"/>
    </location>
</feature>
<feature type="glycosylation site" description="N-linked (GlcNAc...) asparagine; by host" evidence="2">
    <location>
        <position position="58"/>
    </location>
</feature>
<feature type="glycosylation site" description="N-linked (GlcNAc...) asparagine; by host" evidence="2">
    <location>
        <position position="301"/>
    </location>
</feature>
<feature type="glycosylation site" description="N-linked (GlcNAc...) asparagine; by host" evidence="2">
    <location>
        <position position="333"/>
    </location>
</feature>
<feature type="glycosylation site" description="N-linked (GlcNAc...) asparagine; by host" evidence="2">
    <location>
        <position position="340"/>
    </location>
</feature>
<feature type="glycosylation site" description="N-linked (GlcNAc...) asparagine; by host" evidence="2">
    <location>
        <position position="373"/>
    </location>
</feature>
<feature type="glycosylation site" description="N-linked (GlcNAc...) asparagine; by host" evidence="2">
    <location>
        <position position="409"/>
    </location>
</feature>
<feature type="disulfide bond" evidence="1">
    <location>
        <begin position="113"/>
        <end position="130"/>
    </location>
</feature>
<feature type="disulfide bond" evidence="1">
    <location>
        <begin position="122"/>
        <end position="135"/>
    </location>
</feature>
<feature type="disulfide bond" description="Interchain (between SU and TM chains, or C-314 with C-538); in linked form" evidence="1">
    <location>
        <begin position="311"/>
        <end position="538"/>
    </location>
</feature>
<feature type="disulfide bond" evidence="1">
    <location>
        <begin position="311"/>
        <end position="314"/>
    </location>
</feature>
<feature type="disulfide bond" evidence="1">
    <location>
        <begin position="341"/>
        <end position="395"/>
    </location>
</feature>
<feature type="disulfide bond" evidence="1">
    <location>
        <begin position="360"/>
        <end position="372"/>
    </location>
</feature>
<feature type="disulfide bond" evidence="1">
    <location>
        <begin position="402"/>
        <end position="415"/>
    </location>
</feature>
<feature type="disulfide bond" evidence="1">
    <location>
        <begin position="530"/>
        <end position="537"/>
    </location>
</feature>
<feature type="sequence conflict" description="In Ref. 1; ABM47429." evidence="4" ref="1">
    <original>T</original>
    <variation>P</variation>
    <location>
        <position position="261"/>
    </location>
</feature>
<feature type="sequence conflict" description="In Ref. 1; ABM47429." evidence="4" ref="1">
    <original>L</original>
    <variation>Q</variation>
    <location>
        <position position="298"/>
    </location>
</feature>
<feature type="sequence conflict" description="In Ref. 1; ABM47429." evidence="4" ref="1">
    <original>G</original>
    <variation>R</variation>
    <location>
        <position position="568"/>
    </location>
</feature>
<keyword id="KW-0165">Cleavage on pair of basic residues</keyword>
<keyword id="KW-0175">Coiled coil</keyword>
<keyword id="KW-1015">Disulfide bond</keyword>
<keyword id="KW-1169">Fusion of virus membrane with host cell membrane</keyword>
<keyword id="KW-1168">Fusion of virus membrane with host membrane</keyword>
<keyword id="KW-0325">Glycoprotein</keyword>
<keyword id="KW-1032">Host cell membrane</keyword>
<keyword id="KW-1043">Host membrane</keyword>
<keyword id="KW-0945">Host-virus interaction</keyword>
<keyword id="KW-0449">Lipoprotein</keyword>
<keyword id="KW-0472">Membrane</keyword>
<keyword id="KW-0564">Palmitate</keyword>
<keyword id="KW-1185">Reference proteome</keyword>
<keyword id="KW-0732">Signal</keyword>
<keyword id="KW-0812">Transmembrane</keyword>
<keyword id="KW-1133">Transmembrane helix</keyword>
<keyword id="KW-1161">Viral attachment to host cell</keyword>
<keyword id="KW-0261">Viral envelope protein</keyword>
<keyword id="KW-1162">Viral penetration into host cytoplasm</keyword>
<keyword id="KW-0946">Virion</keyword>
<keyword id="KW-1160">Virus entry into host cell</keyword>
<sequence length="645" mass="69876">MESPAFSKPLKDKINPWGPLIIMGILVRAGASVQRDSPHQVFNVTWKITNLMTGQTANATSLLGTMTDTFPKLYFDLCDLVGDNWDDPEPDIGDGCRSPGGRKRTRLYDFYVCPGHTVLTGCGGPREGYCGKWGCETTGQAYWKPSSSWDLISLKRGNTPKGQGPCFDSSVGSGSIQGATPGGRCNPLVLEFTDAGKRASWDAPKTWGLRLYRSTGADPVTLFSLTRQVLNVGPRVPIGPNPVITEQLPPSQPVQIMLPRTPRPPPSGAASMVPGAPPPSQQPGTGDRLLNLVEGAYLALNLTSPDKTQECWLCLVSGPPYYEGVAVLGTYSNHTSAPANCSVTSQHKLTLSEVTGQGLCIGAVPKTHQALCNTTQKTSDGSYYLASPAGTIWACSTGLTPCLSTTVLNLTTDYCVLVELWPKVTYHSPNYVYGQFEKKTKYKREPVSLTLALLLGGLTMGGIAAGVGTGTTALVATKQFEQLQAAIHTDLGALEKSVSALEKSLTSLSEVVLQNRRGLDLLFLKEGGLCAALKEECCFYADHTGVVRDSMAKLRERLNQRQKLFESGQGWFEGLFNRSPWFTTLISTIMGPLIVLLLILLFGPCILNRLVQFVKDRISVVQALVLTQQYHQLKSIDPEEVESRE</sequence>
<accession>Q27ID8</accession>
<accession>A1Z653</accession>
<reference key="1">
    <citation type="journal article" date="2006" name="PLoS Pathog.">
        <title>Identification of a novel Gammaretrovirus in prostate tumors of patients homozygous for R462Q RNASEL variant.</title>
        <authorList>
            <person name="Urisman A."/>
            <person name="Molinaro R.J."/>
            <person name="Fischer N."/>
            <person name="Plummer S.J."/>
            <person name="Casey G."/>
            <person name="Klein E.A."/>
            <person name="Malathi K."/>
            <person name="Magi-Galluzzi C."/>
            <person name="Tubbs R.R."/>
            <person name="Ganem D."/>
            <person name="Silverman R.H."/>
            <person name="DeRisi J.L."/>
        </authorList>
    </citation>
    <scope>NUCLEOTIDE SEQUENCE [GENOMIC RNA]</scope>
    <scope>RETRACTED PAPER</scope>
</reference>
<reference key="2">
    <citation type="journal article" date="2007" name="Proc. Natl. Acad. Sci. U.S.A.">
        <title>An infectious retrovirus susceptible to an IFN antiviral pathway from human prostate tumors.</title>
        <authorList>
            <person name="Dong B."/>
            <person name="Kim S."/>
            <person name="Hong S."/>
            <person name="Das Gupta J."/>
            <person name="Malathi K."/>
            <person name="Klein E.A."/>
            <person name="Ganem D."/>
            <person name="Derisi J.L."/>
            <person name="Chow S.A."/>
            <person name="Silverman R.H."/>
        </authorList>
    </citation>
    <scope>NUCLEOTIDE SEQUENCE [GENOMIC RNA]</scope>
</reference>
<reference key="3">
    <citation type="journal article" date="2012" name="PLoS Pathog.">
        <authorList>
            <person name="Urisman A."/>
            <person name="Molinaro R.J."/>
            <person name="Fischer N."/>
            <person name="Plummer S.J."/>
            <person name="Casey G."/>
            <person name="Klein E.A."/>
            <person name="Malathi K."/>
            <person name="Magi-Galluzzi C."/>
            <person name="Tubbs R.R."/>
            <person name="Ganem D."/>
            <person name="Silverman R.H."/>
            <person name="DeRisi J.L."/>
        </authorList>
    </citation>
    <scope>RETRACTION NOTICE OF PUBMED:16609730</scope>
</reference>
<dbReference type="EMBL" id="DQ399707">
    <property type="protein sequence ID" value="ABD49688.1"/>
    <property type="molecule type" value="Genomic_RNA"/>
</dbReference>
<dbReference type="EMBL" id="EF185282">
    <property type="protein sequence ID" value="ABM47429.1"/>
    <property type="molecule type" value="Genomic_RNA"/>
</dbReference>
<dbReference type="SMR" id="Q27ID8"/>
<dbReference type="GlyCosmos" id="Q27ID8">
    <property type="glycosylation" value="7 sites, No reported glycans"/>
</dbReference>
<dbReference type="Proteomes" id="UP000002240">
    <property type="component" value="Segment"/>
</dbReference>
<dbReference type="Proteomes" id="UP000180675">
    <property type="component" value="Genome"/>
</dbReference>
<dbReference type="GO" id="GO:0020002">
    <property type="term" value="C:host cell plasma membrane"/>
    <property type="evidence" value="ECO:0007669"/>
    <property type="project" value="UniProtKB-SubCell"/>
</dbReference>
<dbReference type="GO" id="GO:0016020">
    <property type="term" value="C:membrane"/>
    <property type="evidence" value="ECO:0007669"/>
    <property type="project" value="UniProtKB-KW"/>
</dbReference>
<dbReference type="GO" id="GO:0019031">
    <property type="term" value="C:viral envelope"/>
    <property type="evidence" value="ECO:0007669"/>
    <property type="project" value="UniProtKB-KW"/>
</dbReference>
<dbReference type="GO" id="GO:0055036">
    <property type="term" value="C:virion membrane"/>
    <property type="evidence" value="ECO:0007669"/>
    <property type="project" value="UniProtKB-SubCell"/>
</dbReference>
<dbReference type="GO" id="GO:0019064">
    <property type="term" value="P:fusion of virus membrane with host plasma membrane"/>
    <property type="evidence" value="ECO:0007669"/>
    <property type="project" value="UniProtKB-KW"/>
</dbReference>
<dbReference type="GO" id="GO:0046718">
    <property type="term" value="P:symbiont entry into host cell"/>
    <property type="evidence" value="ECO:0007669"/>
    <property type="project" value="UniProtKB-KW"/>
</dbReference>
<dbReference type="GO" id="GO:0019062">
    <property type="term" value="P:virion attachment to host cell"/>
    <property type="evidence" value="ECO:0007669"/>
    <property type="project" value="UniProtKB-KW"/>
</dbReference>
<dbReference type="CDD" id="cd09851">
    <property type="entry name" value="HTLV-1-like_HR1-HR2"/>
    <property type="match status" value="1"/>
</dbReference>
<dbReference type="Gene3D" id="1.10.287.210">
    <property type="match status" value="1"/>
</dbReference>
<dbReference type="Gene3D" id="3.90.310.10">
    <property type="entry name" value="ENV polyprotein, receptor-binding domain"/>
    <property type="match status" value="1"/>
</dbReference>
<dbReference type="InterPro" id="IPR008981">
    <property type="entry name" value="FMuLV_rcpt-bd"/>
</dbReference>
<dbReference type="InterPro" id="IPR018154">
    <property type="entry name" value="TLV/ENV_coat_polyprotein"/>
</dbReference>
<dbReference type="PANTHER" id="PTHR10424:SF72">
    <property type="entry name" value="BC035947 PROTEIN-RELATED"/>
    <property type="match status" value="1"/>
</dbReference>
<dbReference type="PANTHER" id="PTHR10424">
    <property type="entry name" value="VIRAL ENVELOPE PROTEIN"/>
    <property type="match status" value="1"/>
</dbReference>
<dbReference type="Pfam" id="PF00429">
    <property type="entry name" value="TLV_coat"/>
    <property type="match status" value="1"/>
</dbReference>
<dbReference type="SUPFAM" id="SSF49830">
    <property type="entry name" value="ENV polyprotein, receptor-binding domain"/>
    <property type="match status" value="1"/>
</dbReference>
<dbReference type="SUPFAM" id="SSF58069">
    <property type="entry name" value="Virus ectodomain"/>
    <property type="match status" value="1"/>
</dbReference>
<evidence type="ECO:0000250" key="1"/>
<evidence type="ECO:0000255" key="2"/>
<evidence type="ECO:0000256" key="3">
    <source>
        <dbReference type="SAM" id="MobiDB-lite"/>
    </source>
</evidence>
<evidence type="ECO:0000305" key="4"/>
<evidence type="ECO:0000305" key="5">
    <source>
    </source>
</evidence>
<evidence type="ECO:0000305" key="6">
    <source>
    </source>
</evidence>
<organism>
    <name type="scientific">Xenotropic MuLV-related virus (isolate VP62)</name>
    <name type="common">XMRV</name>
    <dbReference type="NCBI Taxonomy" id="373193"/>
    <lineage>
        <taxon>Viruses</taxon>
        <taxon>Riboviria</taxon>
        <taxon>Pararnavirae</taxon>
        <taxon>Artverviricota</taxon>
        <taxon>Revtraviricetes</taxon>
        <taxon>Ortervirales</taxon>
        <taxon>Retroviridae</taxon>
        <taxon>Orthoretrovirinae</taxon>
        <taxon>Gammaretrovirus</taxon>
        <taxon>Murine leukemia-related retroviruses</taxon>
    </lineage>
</organism>
<protein>
    <recommendedName>
        <fullName>Envelope glycoprotein</fullName>
    </recommendedName>
    <alternativeName>
        <fullName>Env polyprotein</fullName>
    </alternativeName>
    <component>
        <recommendedName>
            <fullName>Surface protein</fullName>
            <shortName>SU</shortName>
        </recommendedName>
    </component>
    <component>
        <recommendedName>
            <fullName>Transmembrane protein</fullName>
            <shortName>TM</shortName>
        </recommendedName>
    </component>
    <component>
        <recommendedName>
            <fullName>R-peptide</fullName>
        </recommendedName>
    </component>
</protein>
<name>ENV_XMRV6</name>